<organism>
    <name type="scientific">Bacillus cereus (strain ATCC 10987 / NRS 248)</name>
    <dbReference type="NCBI Taxonomy" id="222523"/>
    <lineage>
        <taxon>Bacteria</taxon>
        <taxon>Bacillati</taxon>
        <taxon>Bacillota</taxon>
        <taxon>Bacilli</taxon>
        <taxon>Bacillales</taxon>
        <taxon>Bacillaceae</taxon>
        <taxon>Bacillus</taxon>
        <taxon>Bacillus cereus group</taxon>
    </lineage>
</organism>
<gene>
    <name evidence="1" type="primary">hisH</name>
    <name type="ordered locus">BCE_1528</name>
</gene>
<dbReference type="EC" id="4.3.2.10" evidence="1"/>
<dbReference type="EC" id="3.5.1.2" evidence="1"/>
<dbReference type="EMBL" id="AE017194">
    <property type="protein sequence ID" value="AAS40457.1"/>
    <property type="molecule type" value="Genomic_DNA"/>
</dbReference>
<dbReference type="SMR" id="P61778"/>
<dbReference type="KEGG" id="bca:BCE_1528"/>
<dbReference type="HOGENOM" id="CLU_071837_2_2_9"/>
<dbReference type="UniPathway" id="UPA00031">
    <property type="reaction ID" value="UER00010"/>
</dbReference>
<dbReference type="Proteomes" id="UP000002527">
    <property type="component" value="Chromosome"/>
</dbReference>
<dbReference type="GO" id="GO:0005737">
    <property type="term" value="C:cytoplasm"/>
    <property type="evidence" value="ECO:0007669"/>
    <property type="project" value="UniProtKB-SubCell"/>
</dbReference>
<dbReference type="GO" id="GO:0004359">
    <property type="term" value="F:glutaminase activity"/>
    <property type="evidence" value="ECO:0007669"/>
    <property type="project" value="UniProtKB-EC"/>
</dbReference>
<dbReference type="GO" id="GO:0000107">
    <property type="term" value="F:imidazoleglycerol-phosphate synthase activity"/>
    <property type="evidence" value="ECO:0007669"/>
    <property type="project" value="UniProtKB-UniRule"/>
</dbReference>
<dbReference type="GO" id="GO:0016829">
    <property type="term" value="F:lyase activity"/>
    <property type="evidence" value="ECO:0007669"/>
    <property type="project" value="UniProtKB-KW"/>
</dbReference>
<dbReference type="GO" id="GO:0000105">
    <property type="term" value="P:L-histidine biosynthetic process"/>
    <property type="evidence" value="ECO:0007669"/>
    <property type="project" value="UniProtKB-UniRule"/>
</dbReference>
<dbReference type="CDD" id="cd01748">
    <property type="entry name" value="GATase1_IGP_Synthase"/>
    <property type="match status" value="1"/>
</dbReference>
<dbReference type="FunFam" id="3.40.50.880:FF:000028">
    <property type="entry name" value="Imidazole glycerol phosphate synthase subunit HisH"/>
    <property type="match status" value="1"/>
</dbReference>
<dbReference type="Gene3D" id="3.40.50.880">
    <property type="match status" value="1"/>
</dbReference>
<dbReference type="HAMAP" id="MF_00278">
    <property type="entry name" value="HisH"/>
    <property type="match status" value="1"/>
</dbReference>
<dbReference type="InterPro" id="IPR029062">
    <property type="entry name" value="Class_I_gatase-like"/>
</dbReference>
<dbReference type="InterPro" id="IPR017926">
    <property type="entry name" value="GATASE"/>
</dbReference>
<dbReference type="InterPro" id="IPR010139">
    <property type="entry name" value="Imidazole-glycPsynth_HisH"/>
</dbReference>
<dbReference type="NCBIfam" id="TIGR01855">
    <property type="entry name" value="IMP_synth_hisH"/>
    <property type="match status" value="1"/>
</dbReference>
<dbReference type="PANTHER" id="PTHR42701">
    <property type="entry name" value="IMIDAZOLE GLYCEROL PHOSPHATE SYNTHASE SUBUNIT HISH"/>
    <property type="match status" value="1"/>
</dbReference>
<dbReference type="PANTHER" id="PTHR42701:SF1">
    <property type="entry name" value="IMIDAZOLE GLYCEROL PHOSPHATE SYNTHASE SUBUNIT HISH"/>
    <property type="match status" value="1"/>
</dbReference>
<dbReference type="Pfam" id="PF00117">
    <property type="entry name" value="GATase"/>
    <property type="match status" value="1"/>
</dbReference>
<dbReference type="PIRSF" id="PIRSF000495">
    <property type="entry name" value="Amidotransf_hisH"/>
    <property type="match status" value="1"/>
</dbReference>
<dbReference type="SUPFAM" id="SSF52317">
    <property type="entry name" value="Class I glutamine amidotransferase-like"/>
    <property type="match status" value="1"/>
</dbReference>
<dbReference type="PROSITE" id="PS51273">
    <property type="entry name" value="GATASE_TYPE_1"/>
    <property type="match status" value="1"/>
</dbReference>
<protein>
    <recommendedName>
        <fullName evidence="1">Imidazole glycerol phosphate synthase subunit HisH</fullName>
        <ecNumber evidence="1">4.3.2.10</ecNumber>
    </recommendedName>
    <alternativeName>
        <fullName evidence="1">IGP synthase glutaminase subunit</fullName>
        <ecNumber evidence="1">3.5.1.2</ecNumber>
    </alternativeName>
    <alternativeName>
        <fullName evidence="1">IGP synthase subunit HisH</fullName>
    </alternativeName>
    <alternativeName>
        <fullName evidence="1">ImGP synthase subunit HisH</fullName>
        <shortName evidence="1">IGPS subunit HisH</shortName>
    </alternativeName>
</protein>
<reference key="1">
    <citation type="journal article" date="2004" name="Nucleic Acids Res.">
        <title>The genome sequence of Bacillus cereus ATCC 10987 reveals metabolic adaptations and a large plasmid related to Bacillus anthracis pXO1.</title>
        <authorList>
            <person name="Rasko D.A."/>
            <person name="Ravel J."/>
            <person name="Oekstad O.A."/>
            <person name="Helgason E."/>
            <person name="Cer R.Z."/>
            <person name="Jiang L."/>
            <person name="Shores K.A."/>
            <person name="Fouts D.E."/>
            <person name="Tourasse N.J."/>
            <person name="Angiuoli S.V."/>
            <person name="Kolonay J.F."/>
            <person name="Nelson W.C."/>
            <person name="Kolstoe A.-B."/>
            <person name="Fraser C.M."/>
            <person name="Read T.D."/>
        </authorList>
    </citation>
    <scope>NUCLEOTIDE SEQUENCE [LARGE SCALE GENOMIC DNA]</scope>
    <source>
        <strain>ATCC 10987 / NRS 248</strain>
    </source>
</reference>
<sequence>MIAIIDYGMGNIRSVEQALKHIGAAYIVTSDKEEIFRSDGVILPGVGAFPKAMDVLEEKDLVRVLQEIGRSRKPLLGICLGMQLLFEKSEELQDCNGLSLLPGVIRKLKVPYKIPHMGWNELKKEGEIALWNGVEDGSFVYYVHSYYADCPNEIVYGISDYGVKVPGFVAKENIYGAQFHPEKSGDIGMQMLKNFKGVVESWKSSQLSI</sequence>
<accession>P61778</accession>
<keyword id="KW-0028">Amino-acid biosynthesis</keyword>
<keyword id="KW-0963">Cytoplasm</keyword>
<keyword id="KW-0315">Glutamine amidotransferase</keyword>
<keyword id="KW-0368">Histidine biosynthesis</keyword>
<keyword id="KW-0378">Hydrolase</keyword>
<keyword id="KW-0456">Lyase</keyword>
<feature type="chain" id="PRO_0000152338" description="Imidazole glycerol phosphate synthase subunit HisH">
    <location>
        <begin position="1"/>
        <end position="209"/>
    </location>
</feature>
<feature type="domain" description="Glutamine amidotransferase type-1" evidence="1">
    <location>
        <begin position="1"/>
        <end position="205"/>
    </location>
</feature>
<feature type="active site" description="Nucleophile" evidence="1">
    <location>
        <position position="79"/>
    </location>
</feature>
<feature type="active site" evidence="1">
    <location>
        <position position="180"/>
    </location>
</feature>
<feature type="active site" evidence="1">
    <location>
        <position position="182"/>
    </location>
</feature>
<comment type="function">
    <text evidence="1">IGPS catalyzes the conversion of PRFAR and glutamine to IGP, AICAR and glutamate. The HisH subunit catalyzes the hydrolysis of glutamine to glutamate and ammonia as part of the synthesis of IGP and AICAR. The resulting ammonia molecule is channeled to the active site of HisF.</text>
</comment>
<comment type="catalytic activity">
    <reaction evidence="1">
        <text>5-[(5-phospho-1-deoxy-D-ribulos-1-ylimino)methylamino]-1-(5-phospho-beta-D-ribosyl)imidazole-4-carboxamide + L-glutamine = D-erythro-1-(imidazol-4-yl)glycerol 3-phosphate + 5-amino-1-(5-phospho-beta-D-ribosyl)imidazole-4-carboxamide + L-glutamate + H(+)</text>
        <dbReference type="Rhea" id="RHEA:24793"/>
        <dbReference type="ChEBI" id="CHEBI:15378"/>
        <dbReference type="ChEBI" id="CHEBI:29985"/>
        <dbReference type="ChEBI" id="CHEBI:58278"/>
        <dbReference type="ChEBI" id="CHEBI:58359"/>
        <dbReference type="ChEBI" id="CHEBI:58475"/>
        <dbReference type="ChEBI" id="CHEBI:58525"/>
        <dbReference type="EC" id="4.3.2.10"/>
    </reaction>
</comment>
<comment type="catalytic activity">
    <reaction evidence="1">
        <text>L-glutamine + H2O = L-glutamate + NH4(+)</text>
        <dbReference type="Rhea" id="RHEA:15889"/>
        <dbReference type="ChEBI" id="CHEBI:15377"/>
        <dbReference type="ChEBI" id="CHEBI:28938"/>
        <dbReference type="ChEBI" id="CHEBI:29985"/>
        <dbReference type="ChEBI" id="CHEBI:58359"/>
        <dbReference type="EC" id="3.5.1.2"/>
    </reaction>
</comment>
<comment type="pathway">
    <text evidence="1">Amino-acid biosynthesis; L-histidine biosynthesis; L-histidine from 5-phospho-alpha-D-ribose 1-diphosphate: step 5/9.</text>
</comment>
<comment type="subunit">
    <text evidence="1">Heterodimer of HisH and HisF.</text>
</comment>
<comment type="subcellular location">
    <subcellularLocation>
        <location evidence="1">Cytoplasm</location>
    </subcellularLocation>
</comment>
<evidence type="ECO:0000255" key="1">
    <source>
        <dbReference type="HAMAP-Rule" id="MF_00278"/>
    </source>
</evidence>
<name>HIS5_BACC1</name>
<proteinExistence type="inferred from homology"/>